<dbReference type="EMBL" id="CP000563">
    <property type="protein sequence ID" value="ABN62041.1"/>
    <property type="molecule type" value="Genomic_DNA"/>
</dbReference>
<dbReference type="RefSeq" id="WP_011847045.1">
    <property type="nucleotide sequence ID" value="NC_009052.1"/>
</dbReference>
<dbReference type="SMR" id="A3D5M8"/>
<dbReference type="STRING" id="325240.Sbal_2548"/>
<dbReference type="KEGG" id="sbl:Sbal_2548"/>
<dbReference type="HOGENOM" id="CLU_006684_3_0_6"/>
<dbReference type="OrthoDB" id="9802640at2"/>
<dbReference type="Proteomes" id="UP000001557">
    <property type="component" value="Chromosome"/>
</dbReference>
<dbReference type="GO" id="GO:0005737">
    <property type="term" value="C:cytoplasm"/>
    <property type="evidence" value="ECO:0007669"/>
    <property type="project" value="UniProtKB-SubCell"/>
</dbReference>
<dbReference type="GO" id="GO:0005524">
    <property type="term" value="F:ATP binding"/>
    <property type="evidence" value="ECO:0007669"/>
    <property type="project" value="UniProtKB-UniRule"/>
</dbReference>
<dbReference type="GO" id="GO:0016887">
    <property type="term" value="F:ATP hydrolysis activity"/>
    <property type="evidence" value="ECO:0007669"/>
    <property type="project" value="InterPro"/>
</dbReference>
<dbReference type="GO" id="GO:0140662">
    <property type="term" value="F:ATP-dependent protein folding chaperone"/>
    <property type="evidence" value="ECO:0007669"/>
    <property type="project" value="InterPro"/>
</dbReference>
<dbReference type="GO" id="GO:0051082">
    <property type="term" value="F:unfolded protein binding"/>
    <property type="evidence" value="ECO:0007669"/>
    <property type="project" value="UniProtKB-UniRule"/>
</dbReference>
<dbReference type="CDD" id="cd16927">
    <property type="entry name" value="HATPase_Hsp90-like"/>
    <property type="match status" value="1"/>
</dbReference>
<dbReference type="FunFam" id="3.30.230.80:FF:000002">
    <property type="entry name" value="Molecular chaperone HtpG"/>
    <property type="match status" value="1"/>
</dbReference>
<dbReference type="FunFam" id="3.30.565.10:FF:000009">
    <property type="entry name" value="Molecular chaperone HtpG"/>
    <property type="match status" value="1"/>
</dbReference>
<dbReference type="Gene3D" id="3.30.230.80">
    <property type="match status" value="1"/>
</dbReference>
<dbReference type="Gene3D" id="3.40.50.11260">
    <property type="match status" value="1"/>
</dbReference>
<dbReference type="Gene3D" id="1.20.120.790">
    <property type="entry name" value="Heat shock protein 90, C-terminal domain"/>
    <property type="match status" value="1"/>
</dbReference>
<dbReference type="Gene3D" id="3.30.565.10">
    <property type="entry name" value="Histidine kinase-like ATPase, C-terminal domain"/>
    <property type="match status" value="1"/>
</dbReference>
<dbReference type="HAMAP" id="MF_00505">
    <property type="entry name" value="HSP90"/>
    <property type="match status" value="1"/>
</dbReference>
<dbReference type="InterPro" id="IPR036890">
    <property type="entry name" value="HATPase_C_sf"/>
</dbReference>
<dbReference type="InterPro" id="IPR019805">
    <property type="entry name" value="Heat_shock_protein_90_CS"/>
</dbReference>
<dbReference type="InterPro" id="IPR037196">
    <property type="entry name" value="HSP90_C"/>
</dbReference>
<dbReference type="InterPro" id="IPR001404">
    <property type="entry name" value="Hsp90_fam"/>
</dbReference>
<dbReference type="InterPro" id="IPR020575">
    <property type="entry name" value="Hsp90_N"/>
</dbReference>
<dbReference type="InterPro" id="IPR020568">
    <property type="entry name" value="Ribosomal_Su5_D2-typ_SF"/>
</dbReference>
<dbReference type="NCBIfam" id="NF003555">
    <property type="entry name" value="PRK05218.1"/>
    <property type="match status" value="1"/>
</dbReference>
<dbReference type="PANTHER" id="PTHR11528">
    <property type="entry name" value="HEAT SHOCK PROTEIN 90 FAMILY MEMBER"/>
    <property type="match status" value="1"/>
</dbReference>
<dbReference type="Pfam" id="PF13589">
    <property type="entry name" value="HATPase_c_3"/>
    <property type="match status" value="1"/>
</dbReference>
<dbReference type="Pfam" id="PF00183">
    <property type="entry name" value="HSP90"/>
    <property type="match status" value="1"/>
</dbReference>
<dbReference type="PIRSF" id="PIRSF002583">
    <property type="entry name" value="Hsp90"/>
    <property type="match status" value="1"/>
</dbReference>
<dbReference type="PRINTS" id="PR00775">
    <property type="entry name" value="HEATSHOCK90"/>
</dbReference>
<dbReference type="SMART" id="SM00387">
    <property type="entry name" value="HATPase_c"/>
    <property type="match status" value="1"/>
</dbReference>
<dbReference type="SUPFAM" id="SSF55874">
    <property type="entry name" value="ATPase domain of HSP90 chaperone/DNA topoisomerase II/histidine kinase"/>
    <property type="match status" value="1"/>
</dbReference>
<dbReference type="SUPFAM" id="SSF110942">
    <property type="entry name" value="HSP90 C-terminal domain"/>
    <property type="match status" value="1"/>
</dbReference>
<dbReference type="SUPFAM" id="SSF54211">
    <property type="entry name" value="Ribosomal protein S5 domain 2-like"/>
    <property type="match status" value="1"/>
</dbReference>
<dbReference type="PROSITE" id="PS00298">
    <property type="entry name" value="HSP90"/>
    <property type="match status" value="1"/>
</dbReference>
<organism>
    <name type="scientific">Shewanella baltica (strain OS155 / ATCC BAA-1091)</name>
    <dbReference type="NCBI Taxonomy" id="325240"/>
    <lineage>
        <taxon>Bacteria</taxon>
        <taxon>Pseudomonadati</taxon>
        <taxon>Pseudomonadota</taxon>
        <taxon>Gammaproteobacteria</taxon>
        <taxon>Alteromonadales</taxon>
        <taxon>Shewanellaceae</taxon>
        <taxon>Shewanella</taxon>
    </lineage>
</organism>
<keyword id="KW-0067">ATP-binding</keyword>
<keyword id="KW-0143">Chaperone</keyword>
<keyword id="KW-0963">Cytoplasm</keyword>
<keyword id="KW-0547">Nucleotide-binding</keyword>
<keyword id="KW-1185">Reference proteome</keyword>
<keyword id="KW-0346">Stress response</keyword>
<proteinExistence type="inferred from homology"/>
<protein>
    <recommendedName>
        <fullName evidence="1">Chaperone protein HtpG</fullName>
    </recommendedName>
    <alternativeName>
        <fullName evidence="1">Heat shock protein HtpG</fullName>
    </alternativeName>
    <alternativeName>
        <fullName evidence="1">High temperature protein G</fullName>
    </alternativeName>
</protein>
<evidence type="ECO:0000255" key="1">
    <source>
        <dbReference type="HAMAP-Rule" id="MF_00505"/>
    </source>
</evidence>
<accession>A3D5M8</accession>
<sequence length="637" mass="71649">MSQQETHGFQTEVKQLLHLMIHSLYSNKEIFLRELVSNAADAADKLRYLALTNDALYEGDGELRVRISADKEKGTVTIEDNGVGMTRDGVIEHLGTIAKSGTADFFKNLSGESSKDSQLIGQFGVGFYSAFIVAKKVTVRTRAAGHKADEAVLWESEGEGNFTVDTITKASRGTEITLHLRDEEKEFADDWRLRSIITKYSDHISVPVEMWQEGTPESDGADGEKIPATEGQWKVMNKATALWMRSKADISDEEYQEFYKHISHDYTDALLWSHNRVEGKQEYTNLLYIPAKAPWDMWNRDRKHGLKLFVQRVFIMDDAEQFMPSYLRFVQGLIDSNDLPLNVSREILQDNHVTKAMRTGITKRVLGMLEKLAKDDAEKYQQFWAEFGQVLKEGPAEDFANRERIAGLLRFASTHTGSAAPTVSLDDYISRMKEGQTKIYYIVADSHEAAANSPHLELLRKKGIEVLLMSERIDEWLINHLTEYKEKQLHSVTRGDLELGELEDAAEKEAQEKLEQESVALVERIKAALGSSVADVKVTSRLTDTPACVVAGDGEMSTQMIKLMQAAGQPVPEVKPTFEINPAHPLVSRLNDLQDETAFADWSNLLLQQAQLSEKGSLADPSAFIKLMNQMLLANMK</sequence>
<name>HTPG_SHEB5</name>
<feature type="chain" id="PRO_1000014951" description="Chaperone protein HtpG">
    <location>
        <begin position="1"/>
        <end position="637"/>
    </location>
</feature>
<feature type="region of interest" description="A; substrate-binding" evidence="1">
    <location>
        <begin position="1"/>
        <end position="345"/>
    </location>
</feature>
<feature type="region of interest" description="B" evidence="1">
    <location>
        <begin position="346"/>
        <end position="562"/>
    </location>
</feature>
<feature type="region of interest" description="C" evidence="1">
    <location>
        <begin position="563"/>
        <end position="637"/>
    </location>
</feature>
<comment type="function">
    <text evidence="1">Molecular chaperone. Has ATPase activity.</text>
</comment>
<comment type="subunit">
    <text evidence="1">Homodimer.</text>
</comment>
<comment type="subcellular location">
    <subcellularLocation>
        <location evidence="1">Cytoplasm</location>
    </subcellularLocation>
</comment>
<comment type="similarity">
    <text evidence="1">Belongs to the heat shock protein 90 family.</text>
</comment>
<gene>
    <name evidence="1" type="primary">htpG</name>
    <name type="ordered locus">Sbal_2548</name>
</gene>
<reference key="1">
    <citation type="submission" date="2007-02" db="EMBL/GenBank/DDBJ databases">
        <title>Complete sequence of chromosome of Shewanella baltica OS155.</title>
        <authorList>
            <consortium name="US DOE Joint Genome Institute"/>
            <person name="Copeland A."/>
            <person name="Lucas S."/>
            <person name="Lapidus A."/>
            <person name="Barry K."/>
            <person name="Detter J.C."/>
            <person name="Glavina del Rio T."/>
            <person name="Hammon N."/>
            <person name="Israni S."/>
            <person name="Dalin E."/>
            <person name="Tice H."/>
            <person name="Pitluck S."/>
            <person name="Sims D.R."/>
            <person name="Brettin T."/>
            <person name="Bruce D."/>
            <person name="Han C."/>
            <person name="Tapia R."/>
            <person name="Brainard J."/>
            <person name="Schmutz J."/>
            <person name="Larimer F."/>
            <person name="Land M."/>
            <person name="Hauser L."/>
            <person name="Kyrpides N."/>
            <person name="Mikhailova N."/>
            <person name="Brettar I."/>
            <person name="Klappenbach J."/>
            <person name="Konstantinidis K."/>
            <person name="Rodrigues J."/>
            <person name="Tiedje J."/>
            <person name="Richardson P."/>
        </authorList>
    </citation>
    <scope>NUCLEOTIDE SEQUENCE [LARGE SCALE GENOMIC DNA]</scope>
    <source>
        <strain>OS155 / ATCC BAA-1091</strain>
    </source>
</reference>